<feature type="chain" id="PRO_1000141706" description="DNA-directed RNA polymerase subunit beta">
    <location>
        <begin position="1"/>
        <end position="1228"/>
    </location>
</feature>
<protein>
    <recommendedName>
        <fullName evidence="1">DNA-directed RNA polymerase subunit beta</fullName>
        <shortName evidence="1">RNAP subunit beta</shortName>
        <ecNumber evidence="1">2.7.7.6</ecNumber>
    </recommendedName>
    <alternativeName>
        <fullName evidence="1">RNA polymerase subunit beta</fullName>
    </alternativeName>
    <alternativeName>
        <fullName evidence="1">Transcriptase subunit beta</fullName>
    </alternativeName>
</protein>
<name>RPOB_LEPBP</name>
<accession>B0SSI4</accession>
<comment type="function">
    <text evidence="1">DNA-dependent RNA polymerase catalyzes the transcription of DNA into RNA using the four ribonucleoside triphosphates as substrates.</text>
</comment>
<comment type="catalytic activity">
    <reaction evidence="1">
        <text>RNA(n) + a ribonucleoside 5'-triphosphate = RNA(n+1) + diphosphate</text>
        <dbReference type="Rhea" id="RHEA:21248"/>
        <dbReference type="Rhea" id="RHEA-COMP:14527"/>
        <dbReference type="Rhea" id="RHEA-COMP:17342"/>
        <dbReference type="ChEBI" id="CHEBI:33019"/>
        <dbReference type="ChEBI" id="CHEBI:61557"/>
        <dbReference type="ChEBI" id="CHEBI:140395"/>
        <dbReference type="EC" id="2.7.7.6"/>
    </reaction>
</comment>
<comment type="subunit">
    <text evidence="1">The RNAP catalytic core consists of 2 alpha, 1 beta, 1 beta' and 1 omega subunit. When a sigma factor is associated with the core the holoenzyme is formed, which can initiate transcription.</text>
</comment>
<comment type="similarity">
    <text evidence="1">Belongs to the RNA polymerase beta chain family.</text>
</comment>
<evidence type="ECO:0000255" key="1">
    <source>
        <dbReference type="HAMAP-Rule" id="MF_01321"/>
    </source>
</evidence>
<reference key="1">
    <citation type="journal article" date="2008" name="PLoS ONE">
        <title>Genome sequence of the saprophyte Leptospira biflexa provides insights into the evolution of Leptospira and the pathogenesis of leptospirosis.</title>
        <authorList>
            <person name="Picardeau M."/>
            <person name="Bulach D.M."/>
            <person name="Bouchier C."/>
            <person name="Zuerner R.L."/>
            <person name="Zidane N."/>
            <person name="Wilson P.J."/>
            <person name="Creno S."/>
            <person name="Kuczek E.S."/>
            <person name="Bommezzadri S."/>
            <person name="Davis J.C."/>
            <person name="McGrath A."/>
            <person name="Johnson M.J."/>
            <person name="Boursaux-Eude C."/>
            <person name="Seemann T."/>
            <person name="Rouy Z."/>
            <person name="Coppel R.L."/>
            <person name="Rood J.I."/>
            <person name="Lajus A."/>
            <person name="Davies J.K."/>
            <person name="Medigue C."/>
            <person name="Adler B."/>
        </authorList>
    </citation>
    <scope>NUCLEOTIDE SEQUENCE [LARGE SCALE GENOMIC DNA]</scope>
    <source>
        <strain>Patoc 1 / ATCC 23582 / Paris</strain>
    </source>
</reference>
<dbReference type="EC" id="2.7.7.6" evidence="1"/>
<dbReference type="EMBL" id="CP000786">
    <property type="protein sequence ID" value="ABZ98074.1"/>
    <property type="molecule type" value="Genomic_DNA"/>
</dbReference>
<dbReference type="RefSeq" id="WP_012388945.1">
    <property type="nucleotide sequence ID" value="NC_010602.1"/>
</dbReference>
<dbReference type="SMR" id="B0SSI4"/>
<dbReference type="STRING" id="456481.LEPBI_I1972"/>
<dbReference type="KEGG" id="lbi:LEPBI_I1972"/>
<dbReference type="HOGENOM" id="CLU_000524_4_1_12"/>
<dbReference type="OrthoDB" id="9803954at2"/>
<dbReference type="BioCyc" id="LBIF456481:LEPBI_RS09740-MONOMER"/>
<dbReference type="Proteomes" id="UP000001847">
    <property type="component" value="Chromosome I"/>
</dbReference>
<dbReference type="GO" id="GO:0000428">
    <property type="term" value="C:DNA-directed RNA polymerase complex"/>
    <property type="evidence" value="ECO:0007669"/>
    <property type="project" value="UniProtKB-KW"/>
</dbReference>
<dbReference type="GO" id="GO:0003677">
    <property type="term" value="F:DNA binding"/>
    <property type="evidence" value="ECO:0007669"/>
    <property type="project" value="UniProtKB-UniRule"/>
</dbReference>
<dbReference type="GO" id="GO:0003899">
    <property type="term" value="F:DNA-directed RNA polymerase activity"/>
    <property type="evidence" value="ECO:0007669"/>
    <property type="project" value="UniProtKB-UniRule"/>
</dbReference>
<dbReference type="GO" id="GO:0032549">
    <property type="term" value="F:ribonucleoside binding"/>
    <property type="evidence" value="ECO:0007669"/>
    <property type="project" value="InterPro"/>
</dbReference>
<dbReference type="GO" id="GO:0006351">
    <property type="term" value="P:DNA-templated transcription"/>
    <property type="evidence" value="ECO:0007669"/>
    <property type="project" value="UniProtKB-UniRule"/>
</dbReference>
<dbReference type="CDD" id="cd00653">
    <property type="entry name" value="RNA_pol_B_RPB2"/>
    <property type="match status" value="1"/>
</dbReference>
<dbReference type="Gene3D" id="2.40.50.100">
    <property type="match status" value="1"/>
</dbReference>
<dbReference type="Gene3D" id="2.40.50.150">
    <property type="match status" value="1"/>
</dbReference>
<dbReference type="Gene3D" id="3.90.1100.10">
    <property type="match status" value="2"/>
</dbReference>
<dbReference type="Gene3D" id="2.40.270.10">
    <property type="entry name" value="DNA-directed RNA polymerase, subunit 2, domain 6"/>
    <property type="match status" value="2"/>
</dbReference>
<dbReference type="Gene3D" id="3.90.1800.10">
    <property type="entry name" value="RNA polymerase alpha subunit dimerisation domain"/>
    <property type="match status" value="1"/>
</dbReference>
<dbReference type="Gene3D" id="3.90.1110.10">
    <property type="entry name" value="RNA polymerase Rpb2, domain 2"/>
    <property type="match status" value="1"/>
</dbReference>
<dbReference type="HAMAP" id="MF_01321">
    <property type="entry name" value="RNApol_bact_RpoB"/>
    <property type="match status" value="1"/>
</dbReference>
<dbReference type="InterPro" id="IPR019462">
    <property type="entry name" value="DNA-dir_RNA_pol_bsu_external_1"/>
</dbReference>
<dbReference type="InterPro" id="IPR015712">
    <property type="entry name" value="DNA-dir_RNA_pol_su2"/>
</dbReference>
<dbReference type="InterPro" id="IPR007120">
    <property type="entry name" value="DNA-dir_RNAP_su2_dom"/>
</dbReference>
<dbReference type="InterPro" id="IPR037033">
    <property type="entry name" value="DNA-dir_RNAP_su2_hyb_sf"/>
</dbReference>
<dbReference type="InterPro" id="IPR010243">
    <property type="entry name" value="RNA_pol_bsu_bac"/>
</dbReference>
<dbReference type="InterPro" id="IPR007121">
    <property type="entry name" value="RNA_pol_bsu_CS"/>
</dbReference>
<dbReference type="InterPro" id="IPR007644">
    <property type="entry name" value="RNA_pol_bsu_protrusion"/>
</dbReference>
<dbReference type="InterPro" id="IPR007642">
    <property type="entry name" value="RNA_pol_Rpb2_2"/>
</dbReference>
<dbReference type="InterPro" id="IPR037034">
    <property type="entry name" value="RNA_pol_Rpb2_2_sf"/>
</dbReference>
<dbReference type="InterPro" id="IPR007645">
    <property type="entry name" value="RNA_pol_Rpb2_3"/>
</dbReference>
<dbReference type="InterPro" id="IPR007641">
    <property type="entry name" value="RNA_pol_Rpb2_7"/>
</dbReference>
<dbReference type="InterPro" id="IPR014724">
    <property type="entry name" value="RNA_pol_RPB2_OB-fold"/>
</dbReference>
<dbReference type="NCBIfam" id="TIGR02013">
    <property type="entry name" value="rpoB"/>
    <property type="match status" value="1"/>
</dbReference>
<dbReference type="PANTHER" id="PTHR20856">
    <property type="entry name" value="DNA-DIRECTED RNA POLYMERASE I SUBUNIT 2"/>
    <property type="match status" value="1"/>
</dbReference>
<dbReference type="Pfam" id="PF04563">
    <property type="entry name" value="RNA_pol_Rpb2_1"/>
    <property type="match status" value="1"/>
</dbReference>
<dbReference type="Pfam" id="PF04561">
    <property type="entry name" value="RNA_pol_Rpb2_2"/>
    <property type="match status" value="2"/>
</dbReference>
<dbReference type="Pfam" id="PF04565">
    <property type="entry name" value="RNA_pol_Rpb2_3"/>
    <property type="match status" value="1"/>
</dbReference>
<dbReference type="Pfam" id="PF10385">
    <property type="entry name" value="RNA_pol_Rpb2_45"/>
    <property type="match status" value="1"/>
</dbReference>
<dbReference type="Pfam" id="PF00562">
    <property type="entry name" value="RNA_pol_Rpb2_6"/>
    <property type="match status" value="1"/>
</dbReference>
<dbReference type="Pfam" id="PF04560">
    <property type="entry name" value="RNA_pol_Rpb2_7"/>
    <property type="match status" value="1"/>
</dbReference>
<dbReference type="SUPFAM" id="SSF64484">
    <property type="entry name" value="beta and beta-prime subunits of DNA dependent RNA-polymerase"/>
    <property type="match status" value="1"/>
</dbReference>
<dbReference type="PROSITE" id="PS01166">
    <property type="entry name" value="RNA_POL_BETA"/>
    <property type="match status" value="1"/>
</dbReference>
<sequence length="1228" mass="137913">MHTRMQIRNRVNFGKITDLNLLPNLIYVQKKSFDWFLQSEVKDPTKRLNQGLEAVFRESFPIESPNNDMVMEYGHYVLGEPKRDPQECKDTDSSFAVPLKAVIRLIIKDTGEIREQVVYMGDLPVMTDHGTFIINGAERVVVSQLHRSPGIFFSYDQVRDTFSARVIPYRGSWLEFEMDNKGILVAKIDRKKKFPATLLVKAMGMGTNEEVLRLFYGSSKMKIAGANPKDLKRLIGRRTIADIINMETGEVMLDAGSKINEDNISILREMKVKEVDVIEFPKGKDNPVLINCLEKDGVNDYEDAVKKFHTIMRPGEPSTIENAEAELKRLFFSPKTFDLGIVGRYKINSKFEFNNPKEFSKADDRVLRKQDIIETVRYLVMLMSEAENYYPDDIDHLGNRRIRSVGELIANQLKLGFSRVERVIKERMTVQEPEQQTPQLLISIKPITAVINEFFGSSQLSQFMDQTNPLAELTHKRRLNALGPGGLSRDRAGFEVRDVHYSHYGRMCPIETPEGPNIGLILSMSSFARVNDYGFIETPYRLVKNGKVQKQVEYLTADKEEYHYMAQSNSTVDEKGEFTSKLISTRHRGDFPFRSPAEIQYMDLAPLQVVSVSTALIPFLEHDDANRALMGSNMQRQAVPLLTEEAPFVGTGMEARAAYDAGVCIVAKKDGVVSKVDATGVWIKEDQSKEIVHYPLIKFKKTNQGTCFNQKPNVSMLHTTTGGKVSKVSKERVEVTTPNGEKETHELLLSDEVQFHAVVKEGQEVGIGAPVAGQIIKGEKYGDFGQILQKGTVLANGPSTDAGYLALGRNVLVAFMPWEGYNFEDAILISERIIKDDVFSSIHIEEFEIQARETKLGQEQITRDIPNLSDKAFRDLDESGVIRVGAEVKPGDILVGMVTPKGETDLTPEYKLLHSIFGEKAKEVRDSSLRMPNGFEGTVIDIKRYSRETGDELAAGVEEMVKVYVARKRKLLVGDKMAGRHGNKGVVARVMAQEDMPYMEDGSPVDIVLNPLGVPSRMNLGQIFETQLGFAAKKLGINFETPVFDGASEGDVNDFCKKAGLPENSKFQLYDGRTGEKFINQVFCGYIYMLKLAHLVDDKIHARSTGPYSLVTQQPLGGKAQFGGQRLGEMEVWALEAYGASHTLQELLTIKSDDMLGRARIYEAIVKGIHSIKPGIPESFNVLVQELRGLALDIIIKDSEGLEVDISDYEDEFSKNKKKIKFETIENV</sequence>
<organism>
    <name type="scientific">Leptospira biflexa serovar Patoc (strain Patoc 1 / ATCC 23582 / Paris)</name>
    <dbReference type="NCBI Taxonomy" id="456481"/>
    <lineage>
        <taxon>Bacteria</taxon>
        <taxon>Pseudomonadati</taxon>
        <taxon>Spirochaetota</taxon>
        <taxon>Spirochaetia</taxon>
        <taxon>Leptospirales</taxon>
        <taxon>Leptospiraceae</taxon>
        <taxon>Leptospira</taxon>
    </lineage>
</organism>
<gene>
    <name evidence="1" type="primary">rpoB</name>
    <name type="ordered locus">LEPBI_I1972</name>
</gene>
<proteinExistence type="inferred from homology"/>
<keyword id="KW-0240">DNA-directed RNA polymerase</keyword>
<keyword id="KW-0548">Nucleotidyltransferase</keyword>
<keyword id="KW-1185">Reference proteome</keyword>
<keyword id="KW-0804">Transcription</keyword>
<keyword id="KW-0808">Transferase</keyword>